<evidence type="ECO:0000250" key="1">
    <source>
        <dbReference type="UniProtKB" id="P00393"/>
    </source>
</evidence>
<evidence type="ECO:0000305" key="2"/>
<proteinExistence type="inferred from homology"/>
<protein>
    <recommendedName>
        <fullName evidence="1">Type II NADH:quinone oxidoreductase</fullName>
        <ecNumber evidence="1">1.6.5.9</ecNumber>
    </recommendedName>
    <alternativeName>
        <fullName evidence="1">NADH dehydrogenase-2</fullName>
        <shortName evidence="1">NADH dh II</shortName>
        <shortName evidence="1">NDH-2</shortName>
    </alternativeName>
    <alternativeName>
        <fullName evidence="1">NADH-quinone reductase</fullName>
        <shortName evidence="1">NQR</shortName>
    </alternativeName>
</protein>
<name>NDH_HAEIN</name>
<dbReference type="EC" id="1.6.5.9" evidence="1"/>
<dbReference type="EMBL" id="L42023">
    <property type="protein sequence ID" value="AAC22405.1"/>
    <property type="molecule type" value="Genomic_DNA"/>
</dbReference>
<dbReference type="PIR" id="C64090">
    <property type="entry name" value="C64090"/>
</dbReference>
<dbReference type="RefSeq" id="NP_438906.1">
    <property type="nucleotide sequence ID" value="NC_000907.1"/>
</dbReference>
<dbReference type="SMR" id="P44856"/>
<dbReference type="STRING" id="71421.HI_0747"/>
<dbReference type="EnsemblBacteria" id="AAC22405">
    <property type="protein sequence ID" value="AAC22405"/>
    <property type="gene ID" value="HI_0747"/>
</dbReference>
<dbReference type="KEGG" id="hin:HI_0747"/>
<dbReference type="PATRIC" id="fig|71421.8.peg.784"/>
<dbReference type="eggNOG" id="COG1252">
    <property type="taxonomic scope" value="Bacteria"/>
</dbReference>
<dbReference type="HOGENOM" id="CLU_021377_7_0_6"/>
<dbReference type="OrthoDB" id="9781621at2"/>
<dbReference type="PhylomeDB" id="P44856"/>
<dbReference type="BioCyc" id="HINF71421:G1GJ1-785-MONOMER"/>
<dbReference type="Proteomes" id="UP000000579">
    <property type="component" value="Chromosome"/>
</dbReference>
<dbReference type="GO" id="GO:0005886">
    <property type="term" value="C:plasma membrane"/>
    <property type="evidence" value="ECO:0007669"/>
    <property type="project" value="UniProtKB-SubCell"/>
</dbReference>
<dbReference type="GO" id="GO:0008137">
    <property type="term" value="F:NADH dehydrogenase (ubiquinone) activity"/>
    <property type="evidence" value="ECO:0000318"/>
    <property type="project" value="GO_Central"/>
</dbReference>
<dbReference type="GO" id="GO:0050136">
    <property type="term" value="F:NADH:ubiquinone reductase (non-electrogenic) activity"/>
    <property type="evidence" value="ECO:0007669"/>
    <property type="project" value="UniProtKB-EC"/>
</dbReference>
<dbReference type="Gene3D" id="3.50.50.100">
    <property type="match status" value="1"/>
</dbReference>
<dbReference type="InterPro" id="IPR036188">
    <property type="entry name" value="FAD/NAD-bd_sf"/>
</dbReference>
<dbReference type="InterPro" id="IPR023753">
    <property type="entry name" value="FAD/NAD-binding_dom"/>
</dbReference>
<dbReference type="InterPro" id="IPR051169">
    <property type="entry name" value="NADH-Q_oxidoreductase"/>
</dbReference>
<dbReference type="PANTHER" id="PTHR42913:SF3">
    <property type="entry name" value="64 KDA MITOCHONDRIAL NADH DEHYDROGENASE (EUROFUNG)"/>
    <property type="match status" value="1"/>
</dbReference>
<dbReference type="PANTHER" id="PTHR42913">
    <property type="entry name" value="APOPTOSIS-INDUCING FACTOR 1"/>
    <property type="match status" value="1"/>
</dbReference>
<dbReference type="Pfam" id="PF07992">
    <property type="entry name" value="Pyr_redox_2"/>
    <property type="match status" value="1"/>
</dbReference>
<dbReference type="PRINTS" id="PR00368">
    <property type="entry name" value="FADPNR"/>
</dbReference>
<dbReference type="PRINTS" id="PR00411">
    <property type="entry name" value="PNDRDTASEI"/>
</dbReference>
<dbReference type="SUPFAM" id="SSF51905">
    <property type="entry name" value="FAD/NAD(P)-binding domain"/>
    <property type="match status" value="1"/>
</dbReference>
<reference key="1">
    <citation type="journal article" date="1995" name="Science">
        <title>Whole-genome random sequencing and assembly of Haemophilus influenzae Rd.</title>
        <authorList>
            <person name="Fleischmann R.D."/>
            <person name="Adams M.D."/>
            <person name="White O."/>
            <person name="Clayton R.A."/>
            <person name="Kirkness E.F."/>
            <person name="Kerlavage A.R."/>
            <person name="Bult C.J."/>
            <person name="Tomb J.-F."/>
            <person name="Dougherty B.A."/>
            <person name="Merrick J.M."/>
            <person name="McKenney K."/>
            <person name="Sutton G.G."/>
            <person name="FitzHugh W."/>
            <person name="Fields C.A."/>
            <person name="Gocayne J.D."/>
            <person name="Scott J.D."/>
            <person name="Shirley R."/>
            <person name="Liu L.-I."/>
            <person name="Glodek A."/>
            <person name="Kelley J.M."/>
            <person name="Weidman J.F."/>
            <person name="Phillips C.A."/>
            <person name="Spriggs T."/>
            <person name="Hedblom E."/>
            <person name="Cotton M.D."/>
            <person name="Utterback T.R."/>
            <person name="Hanna M.C."/>
            <person name="Nguyen D.T."/>
            <person name="Saudek D.M."/>
            <person name="Brandon R.C."/>
            <person name="Fine L.D."/>
            <person name="Fritchman J.L."/>
            <person name="Fuhrmann J.L."/>
            <person name="Geoghagen N.S.M."/>
            <person name="Gnehm C.L."/>
            <person name="McDonald L.A."/>
            <person name="Small K.V."/>
            <person name="Fraser C.M."/>
            <person name="Smith H.O."/>
            <person name="Venter J.C."/>
        </authorList>
    </citation>
    <scope>NUCLEOTIDE SEQUENCE [LARGE SCALE GENOMIC DNA]</scope>
    <source>
        <strain>ATCC 51907 / DSM 11121 / KW20 / Rd</strain>
    </source>
</reference>
<comment type="function">
    <text evidence="1">Alternative, nonproton pumping NADH:quinone oxidoreductase that delivers electrons to the respiratory chain by oxidation of NADH and reduction of quinones (By similarity). Utilizes NADH exclusively, and electron flow from NADH to ubiquinone does not generate an electrochemical gradient (By similarity).</text>
</comment>
<comment type="catalytic activity">
    <reaction evidence="1">
        <text>a quinone + NADH + H(+) = a quinol + NAD(+)</text>
        <dbReference type="Rhea" id="RHEA:46160"/>
        <dbReference type="ChEBI" id="CHEBI:15378"/>
        <dbReference type="ChEBI" id="CHEBI:24646"/>
        <dbReference type="ChEBI" id="CHEBI:57540"/>
        <dbReference type="ChEBI" id="CHEBI:57945"/>
        <dbReference type="ChEBI" id="CHEBI:132124"/>
        <dbReference type="EC" id="1.6.5.9"/>
    </reaction>
</comment>
<comment type="catalytic activity">
    <reaction evidence="1">
        <text>a ubiquinone + NADH + H(+) = a ubiquinol + NAD(+)</text>
        <dbReference type="Rhea" id="RHEA:23152"/>
        <dbReference type="Rhea" id="RHEA-COMP:9565"/>
        <dbReference type="Rhea" id="RHEA-COMP:9566"/>
        <dbReference type="ChEBI" id="CHEBI:15378"/>
        <dbReference type="ChEBI" id="CHEBI:16389"/>
        <dbReference type="ChEBI" id="CHEBI:17976"/>
        <dbReference type="ChEBI" id="CHEBI:57540"/>
        <dbReference type="ChEBI" id="CHEBI:57945"/>
    </reaction>
</comment>
<comment type="cofactor">
    <cofactor evidence="1">
        <name>FAD</name>
        <dbReference type="ChEBI" id="CHEBI:57692"/>
    </cofactor>
    <text evidence="1">Binds 1 FAD per subunit.</text>
</comment>
<comment type="subcellular location">
    <subcellularLocation>
        <location evidence="1">Cell inner membrane</location>
        <topology evidence="1">Peripheral membrane protein</topology>
        <orientation evidence="1">Cytoplasmic side</orientation>
    </subcellularLocation>
    <text evidence="1">Membrane-bound (By similarity). Interaction with the membrane is probably mediated by amphipathic helices and electrostatic interactions (By similarity).</text>
</comment>
<comment type="similarity">
    <text evidence="2">Belongs to the NADH dehydrogenase family.</text>
</comment>
<feature type="chain" id="PRO_0000079891" description="Type II NADH:quinone oxidoreductase">
    <location>
        <begin position="1"/>
        <end position="444"/>
    </location>
</feature>
<feature type="binding site" evidence="1">
    <location>
        <begin position="8"/>
        <end position="12"/>
    </location>
    <ligand>
        <name>FAD</name>
        <dbReference type="ChEBI" id="CHEBI:57692"/>
    </ligand>
</feature>
<feature type="binding site" evidence="1">
    <location>
        <position position="38"/>
    </location>
    <ligand>
        <name>FAD</name>
        <dbReference type="ChEBI" id="CHEBI:57692"/>
    </ligand>
</feature>
<feature type="binding site" evidence="1">
    <location>
        <position position="120"/>
    </location>
    <ligand>
        <name>FAD</name>
        <dbReference type="ChEBI" id="CHEBI:57692"/>
    </ligand>
</feature>
<feature type="binding site" evidence="1">
    <location>
        <begin position="186"/>
        <end position="191"/>
    </location>
    <ligand>
        <name>NAD(+)</name>
        <dbReference type="ChEBI" id="CHEBI:57540"/>
    </ligand>
</feature>
<feature type="binding site" evidence="1">
    <location>
        <position position="285"/>
    </location>
    <ligand>
        <name>NAD(+)</name>
        <dbReference type="ChEBI" id="CHEBI:57540"/>
    </ligand>
</feature>
<feature type="binding site" evidence="1">
    <location>
        <position position="325"/>
    </location>
    <ligand>
        <name>FAD</name>
        <dbReference type="ChEBI" id="CHEBI:57692"/>
    </ligand>
</feature>
<feature type="binding site" evidence="1">
    <location>
        <position position="341"/>
    </location>
    <ligand>
        <name>FAD</name>
        <dbReference type="ChEBI" id="CHEBI:57692"/>
    </ligand>
</feature>
<sequence>MKNVVIVGGGAGGIELATFLGNKLGRQKQAKVTLVDRNATHLWKPLLHEIATGVMDDGVDSLSYRAHGKNHFFSFEQGSIIRINREQKYVELAPVYGQEGDMLVIARRIPYDYLVIAIGSKSNDFNTKGVADNCIFLDSSKQALRFQHKLLELFLKFSENRALDDIGEEEFKQKLVDENKVNIAIVGGGATGVELTAELYHAAEDLSSYGYGKIDSSCLQVTLVEAGTRLLPALPENLSAAVLDELKEMGTNVQLNTMITEAQPNTLITKDGGEIKADLIVWAAGVRASTVTQQFDGLEINRINQLVVKDTLQTTVDDSIFAIGDCAALIQSNGKLVPPRAQAAHQMAKACAKNIFALFENKPLKSFKYNDKGTLVSLSNFTALGSLTNKFGKNPLTVQGKFAQFAYVSLYRMHQHALHGCIKIGLIILVDKLNRYLKPRLKLH</sequence>
<gene>
    <name type="primary">ndh</name>
    <name type="ordered locus">HI_0747</name>
</gene>
<accession>P44856</accession>
<organism>
    <name type="scientific">Haemophilus influenzae (strain ATCC 51907 / DSM 11121 / KW20 / Rd)</name>
    <dbReference type="NCBI Taxonomy" id="71421"/>
    <lineage>
        <taxon>Bacteria</taxon>
        <taxon>Pseudomonadati</taxon>
        <taxon>Pseudomonadota</taxon>
        <taxon>Gammaproteobacteria</taxon>
        <taxon>Pasteurellales</taxon>
        <taxon>Pasteurellaceae</taxon>
        <taxon>Haemophilus</taxon>
    </lineage>
</organism>
<keyword id="KW-0997">Cell inner membrane</keyword>
<keyword id="KW-1003">Cell membrane</keyword>
<keyword id="KW-0249">Electron transport</keyword>
<keyword id="KW-0274">FAD</keyword>
<keyword id="KW-0285">Flavoprotein</keyword>
<keyword id="KW-0472">Membrane</keyword>
<keyword id="KW-0520">NAD</keyword>
<keyword id="KW-0560">Oxidoreductase</keyword>
<keyword id="KW-1185">Reference proteome</keyword>
<keyword id="KW-0813">Transport</keyword>
<keyword id="KW-0830">Ubiquinone</keyword>